<gene>
    <name type="primary">CHGA</name>
</gene>
<keyword id="KW-0002">3D-structure</keyword>
<keyword id="KW-0027">Amidation</keyword>
<keyword id="KW-0044">Antibiotic</keyword>
<keyword id="KW-0929">Antimicrobial</keyword>
<keyword id="KW-0106">Calcium</keyword>
<keyword id="KW-0165">Cleavage on pair of basic residues</keyword>
<keyword id="KW-0968">Cytoplasmic vesicle</keyword>
<keyword id="KW-0903">Direct protein sequencing</keyword>
<keyword id="KW-1015">Disulfide bond</keyword>
<keyword id="KW-0295">Fungicide</keyword>
<keyword id="KW-0325">Glycoprotein</keyword>
<keyword id="KW-0558">Oxidation</keyword>
<keyword id="KW-0597">Phosphoprotein</keyword>
<keyword id="KW-0654">Proteoglycan</keyword>
<keyword id="KW-1185">Reference proteome</keyword>
<keyword id="KW-0964">Secreted</keyword>
<keyword id="KW-0732">Signal</keyword>
<name>CMGA_BOVIN</name>
<protein>
    <recommendedName>
        <fullName evidence="30 32">Chromogranin-A</fullName>
        <shortName>CgA</shortName>
    </recommendedName>
    <alternativeName>
        <fullName evidence="31">Pituitary secretory protein I</fullName>
        <shortName>SP-I</shortName>
    </alternativeName>
    <component>
        <recommendedName>
            <fullName evidence="24">Vasostatin-1</fullName>
        </recommendedName>
    </component>
    <component>
        <recommendedName>
            <fullName evidence="25">Chromofungin</fullName>
        </recommendedName>
    </component>
    <component>
        <recommendedName>
            <fullName evidence="27">Chromostatin</fullName>
        </recommendedName>
    </component>
    <component>
        <recommendedName>
            <fullName evidence="34">Chromacin</fullName>
        </recommendedName>
    </component>
    <component>
        <recommendedName>
            <fullName evidence="29">Pancreastatin</fullName>
        </recommendedName>
    </component>
    <component>
        <recommendedName>
            <fullName evidence="2">WE-14</fullName>
        </recommendedName>
    </component>
    <component>
        <recommendedName>
            <fullName evidence="26">Catestatin</fullName>
        </recommendedName>
    </component>
    <component>
        <recommendedName>
            <fullName evidence="33">GE-25</fullName>
        </recommendedName>
    </component>
    <component>
        <recommendedName>
            <fullName>Serpinin-RRG</fullName>
        </recommendedName>
    </component>
    <component>
        <recommendedName>
            <fullName evidence="28">Serpinin</fullName>
        </recommendedName>
    </component>
    <component>
        <recommendedName>
            <fullName>p-Glu serpinin precursor</fullName>
        </recommendedName>
    </component>
</protein>
<reference key="1">
    <citation type="journal article" date="1991" name="Mol. Endocrinol.">
        <title>The bovine chromogranin A gene: structural basis for hormone regulation and generation of biologically active peptides.</title>
        <authorList>
            <person name="Iacangelo A.L."/>
            <person name="Grimes M."/>
            <person name="Eiden L.E."/>
        </authorList>
    </citation>
    <scope>NUCLEOTIDE SEQUENCE [GENOMIC DNA]</scope>
</reference>
<reference key="2">
    <citation type="journal article" date="1986" name="EMBO J.">
        <title>The primary structure of bovine chromogranin A: a representative of a class of acidic secretory proteins common to a variety of peptidergic cells.</title>
        <authorList>
            <person name="Benedum U.M."/>
            <person name="Baeuerle P.A."/>
            <person name="Konecki D.S."/>
            <person name="Frank R."/>
            <person name="Powell J."/>
            <person name="Mallet J."/>
            <person name="Huttner W.B."/>
        </authorList>
    </citation>
    <scope>NUCLEOTIDE SEQUENCE [MRNA]</scope>
</reference>
<reference key="3">
    <citation type="journal article" date="1986" name="Nature">
        <title>Bovine chromogranin A sequence and distribution of its messenger RNA in endocrine tissues.</title>
        <authorList>
            <person name="Iacangelo A.L."/>
            <person name="Affolter H.-U."/>
            <person name="Eiden L.E."/>
            <person name="Herbert E."/>
            <person name="Grimes M."/>
        </authorList>
    </citation>
    <scope>NUCLEOTIDE SEQUENCE [MRNA]</scope>
</reference>
<reference key="4">
    <citation type="journal article" date="1987" name="Proc. Natl. Acad. Sci. U.S.A.">
        <title>Primary structure of bovine pituitary secretory protein I (chromogranin A) deduced from the cDNA sequence.</title>
        <authorList>
            <person name="Ahn T.G."/>
            <person name="Cohn D.V."/>
            <person name="Gorr S.U."/>
            <person name="Ornstein D.L."/>
            <person name="Kashdan M.A."/>
            <person name="Levine M.A."/>
        </authorList>
    </citation>
    <scope>NUCLEOTIDE SEQUENCE [MRNA]</scope>
</reference>
<reference key="5">
    <citation type="journal article" date="1997" name="FEBS Lett.">
        <title>Identification of the secretory vesicle membrane binding region of chromogranin A.</title>
        <authorList>
            <person name="Kang Y.K."/>
            <person name="Yoo S.H."/>
        </authorList>
    </citation>
    <scope>NUCLEOTIDE SEQUENCE [MRNA]</scope>
</reference>
<reference key="6">
    <citation type="submission" date="2005-09" db="EMBL/GenBank/DDBJ databases">
        <authorList>
            <consortium name="NIH - Mammalian Gene Collection (MGC) project"/>
        </authorList>
    </citation>
    <scope>NUCLEOTIDE SEQUENCE [LARGE SCALE MRNA]</scope>
    <source>
        <strain>Hereford</strain>
        <tissue>Ascending colon</tissue>
    </source>
</reference>
<reference key="7">
    <citation type="journal article" date="2003" name="Biochemistry">
        <title>Primary sequence characterization of catestatin intermediates and peptides defines proteolytic cleavage sites utilized for converting chromogranin A into active catestatin secreted from neuroendocrine chromaffin cells.</title>
        <authorList>
            <person name="Lee J.C."/>
            <person name="Taylor C.V."/>
            <person name="Gaucher S.P."/>
            <person name="Toneff T."/>
            <person name="Taupenot L."/>
            <person name="Yasothornsrikul S."/>
            <person name="Mahata S.K."/>
            <person name="Sei C."/>
            <person name="Parmer R.J."/>
            <person name="Neveu J.M."/>
            <person name="Lane W.S."/>
            <person name="Gibson B.W."/>
            <person name="O'Connor D.T."/>
            <person name="Hook V.Y.H."/>
        </authorList>
    </citation>
    <scope>PROTEIN SEQUENCE OF 19-28; 97-106; 134-143; 266-275 AND 350-359</scope>
    <scope>MASS SPECTROMETRY</scope>
    <source>
        <tissue>Chromaffin cell</tissue>
    </source>
</reference>
<reference key="8">
    <citation type="journal article" date="1991" name="Endocrinology">
        <title>Chromogranin A: posttranslational modifications in secretory granules.</title>
        <authorList>
            <person name="Barbosa J.A."/>
            <person name="Gill B.M."/>
            <person name="Takiyyuddin M.A."/>
            <person name="O'Connor D.T."/>
        </authorList>
    </citation>
    <scope>PROTEIN SEQUENCE OF 19-38; 97-111 AND 134-139</scope>
</reference>
<reference key="9">
    <citation type="journal article" date="1990" name="J. Biol. Chem.">
        <title>Ca2(+)-induced conformational change and aggregation of chromogranin A.</title>
        <authorList>
            <person name="Yoo S.H."/>
            <person name="Albanesi J.P."/>
        </authorList>
    </citation>
    <scope>PROTEIN SEQUENCE OF 19-45</scope>
    <scope>CALCIUM-BINDING</scope>
</reference>
<reference key="10">
    <citation type="journal article" date="1993" name="FEBS Lett.">
        <title>Nature of the pH-induced conformational changes and exposure of the C-terminal region of chromogranin A.</title>
        <authorList>
            <person name="Yoo S.H."/>
            <person name="Ferretti J.A."/>
        </authorList>
    </citation>
    <scope>PROTEIN SEQUENCE OF 19-26 AND 266-272</scope>
</reference>
<reference key="11">
    <citation type="journal article" date="1991" name="Proc. Natl. Acad. Sci. U.S.A.">
        <title>Chromostatin, a 20-amino acid peptide derived from chromogranin A, inhibits chromaffin cell secretion.</title>
        <authorList>
            <person name="Galindo E."/>
            <person name="Rill A."/>
            <person name="Bader M.-F."/>
            <person name="Aunis D."/>
        </authorList>
    </citation>
    <scope>PROTEIN SEQUENCE OF 142-161</scope>
    <scope>FUNCTION (CHROMOSTATIN)</scope>
</reference>
<reference key="12">
    <citation type="journal article" date="1994" name="Proc. Natl. Acad. Sci. U.S.A.">
        <authorList>
            <person name="Galindo E."/>
            <person name="Rill A."/>
            <person name="Bader M.-F."/>
            <person name="Aunis D."/>
        </authorList>
    </citation>
    <scope>ERRATUM OF PUBMED:1996343</scope>
</reference>
<reference key="13">
    <citation type="journal article" date="1991" name="Biochem. J.">
        <title>Heterogeneity of chromogranin A-derived peptides in bovine gut, pancreas and adrenal medulla.</title>
        <authorList>
            <person name="Watkinson A."/>
            <person name="Jonsson A.C."/>
            <person name="Davison M."/>
            <person name="Young J."/>
            <person name="Lee C.M."/>
            <person name="Moore S."/>
            <person name="Dockray G.J."/>
        </authorList>
    </citation>
    <scope>PROTEIN SEQUENCE OF 266-331</scope>
</reference>
<reference key="14">
    <citation type="journal article" date="1989" name="Regul. Pept.">
        <title>Isolation and characterization of bovine pancreastatin.</title>
        <authorList>
            <person name="Nakano I."/>
            <person name="Funakoshi A."/>
            <person name="Miyasaka K."/>
            <person name="Ishida K."/>
            <person name="Makk G."/>
            <person name="Angwin P."/>
            <person name="Chang D."/>
            <person name="Tatemoto K."/>
        </authorList>
    </citation>
    <scope>PROTEIN SEQUENCE OF 266-312</scope>
    <scope>AMIDATION AT GLY-312</scope>
    <scope>FUNCTION (PANCREASTATIN)</scope>
</reference>
<reference key="15">
    <citation type="journal article" date="1993" name="Biochem. J.">
        <title>Post-translational processing of chromogranin A: differential distribution of phosphorylated variants of pancreastatin and fragments 248-313 and 297-313 in bovine pancreas and ileum.</title>
        <authorList>
            <person name="Watkinson A."/>
            <person name="Rogers M."/>
            <person name="Dockray G.J."/>
        </authorList>
    </citation>
    <scope>PROTEIN SEQUENCE OF 303-331</scope>
</reference>
<reference key="16">
    <citation type="journal article" date="1996" name="J. Biol. Chem.">
        <title>Antibacterial activity of glycosylated and phosphorylated chromogranin A-derived peptide 173-194 from bovine adrenal medullary chromaffin granules.</title>
        <authorList>
            <person name="Strub J.-M."/>
            <person name="Goumon Y."/>
            <person name="Lugardon K."/>
            <person name="Capon C."/>
            <person name="Lopez M."/>
            <person name="Moniatte M."/>
            <person name="van Dorsselaer A."/>
            <person name="Aunis D."/>
            <person name="Metz-Boutigue M.-H."/>
        </authorList>
    </citation>
    <scope>PROTEIN SEQUENCE OF 191-212</scope>
    <scope>PHOSPHORYLATION AT TYR-191</scope>
    <scope>GLYCOSYLATION AT SER-204</scope>
    <scope>FUNCTION (CHROMACIN)</scope>
    <source>
        <tissue>Chromaffin cell</tissue>
    </source>
</reference>
<reference key="17">
    <citation type="journal article" date="2000" name="J. Biol. Chem.">
        <title>Formation of the catecholamine release-inhibitory peptide catestatin from chromogranin A. Determination of proteolytic cleavage sites in hormone storage granules.</title>
        <authorList>
            <person name="Taylor C.V."/>
            <person name="Taupenot L."/>
            <person name="Mahata S.K."/>
            <person name="Mahata M."/>
            <person name="Wu H."/>
            <person name="Yasothornsrikul S."/>
            <person name="Toneff T."/>
            <person name="Caporale C."/>
            <person name="Jiang Q."/>
            <person name="Parmer R.J."/>
            <person name="Hook V.Y."/>
            <person name="O'Connor D.T."/>
        </authorList>
    </citation>
    <scope>PROTEIN SEQUENCE OF 351-363</scope>
    <scope>MASS SPECTROMETRY</scope>
    <scope>PROTEOLYTIC PROCESSING</scope>
    <scope>OXIDATION AT MET-364</scope>
    <scope>SUBCELLULAR LOCATION</scope>
</reference>
<reference key="18">
    <citation type="journal article" date="1994" name="Neuroscience">
        <title>Molecular characterization of immunoreactivities of peptides derived from chromogranin A (GE-25) and from secretogranin II (secretoneurin) in human and bovine cerebrospinal fluid.</title>
        <authorList>
            <person name="Kirchmair R."/>
            <person name="Benzer A."/>
            <person name="Troger J."/>
            <person name="Miller C."/>
            <person name="Marksteiner J."/>
            <person name="Saria A."/>
            <person name="Gasser R.W."/>
            <person name="Hogue-Angeletti R."/>
            <person name="Fischer-Colbrie R."/>
            <person name="Winkler H."/>
        </authorList>
    </citation>
    <scope>CHARACTERIZATION OF GE-25</scope>
    <scope>TISSUE SPECIFICITY</scope>
</reference>
<reference key="19">
    <citation type="journal article" date="1995" name="Biochem. J.">
        <title>Large variations in the proteolytic formation of a chromogranin A-derived peptide (GE-25) in neuroendocrine tissues.</title>
        <authorList>
            <person name="Kirchmair R."/>
            <person name="Leitner B."/>
            <person name="Fischer-Colbrie R."/>
            <person name="Marksteiner J."/>
            <person name="Hogue-Angeletti R."/>
            <person name="Winkler H."/>
        </authorList>
    </citation>
    <scope>CHARACTERIZATION OF GE-25</scope>
    <scope>TISSUE SPECIFICITY</scope>
</reference>
<reference key="20">
    <citation type="journal article" date="1997" name="J. Clin. Invest.">
        <title>Novel autocrine feedback control of catecholamine release. A discrete chromogranin a fragment is a noncompetitive nicotinic cholinergic antagonist.</title>
        <authorList>
            <person name="Mahata S.K."/>
            <person name="O'Connor D.T."/>
            <person name="Mahata M."/>
            <person name="Yoo S.H."/>
            <person name="Taupenot L."/>
            <person name="Wu H."/>
            <person name="Gill B.M."/>
            <person name="Parmer R.J."/>
        </authorList>
    </citation>
    <scope>FUNCTION (CATESTATIN)</scope>
</reference>
<reference key="21">
    <citation type="journal article" date="1998" name="Peptides">
        <title>Mechanism of cardiovascular actions of the chromogranin A fragment catestatin in vivo.</title>
        <authorList>
            <person name="Kennedy B.P."/>
            <person name="Mahata S.K."/>
            <person name="O'Connor D.T."/>
            <person name="Ziegler M.G."/>
        </authorList>
    </citation>
    <scope>FUNCTION (CATESTATIN)</scope>
</reference>
<reference key="22">
    <citation type="journal article" date="2000" name="J. Biol. Chem.">
        <title>Antibacterial and antifungal activities of vasostatin-1, the N-terminal fragment of chromogranin A.</title>
        <authorList>
            <person name="Lugardon K."/>
            <person name="Raffner R."/>
            <person name="Goumon Y."/>
            <person name="Corti A."/>
            <person name="Delmas A."/>
            <person name="Bulet P."/>
            <person name="Aunis D."/>
            <person name="Metz-Boutigue M.-H."/>
        </authorList>
    </citation>
    <scope>FUNCTION (VASOSTATIN-1)</scope>
</reference>
<reference key="23">
    <citation type="journal article" date="2001" name="J. Biol. Chem.">
        <title>Localization of three types of the inositol 1,4,5-trisphosphate receptor/Ca2+ channel in the secretory granules and coupling with the Ca2+ storage proteins chromogranins A and B.</title>
        <authorList>
            <person name="Yoo S.H."/>
            <person name="Oh Y.S."/>
            <person name="Kang M.K."/>
            <person name="Huh Y.H."/>
            <person name="So S.H."/>
            <person name="Park H.S."/>
            <person name="Park H.Y."/>
        </authorList>
    </citation>
    <scope>INTERACTION WITH ITPR1</scope>
    <scope>SUBCELLULAR LOCATION</scope>
    <source>
        <tissue>Adrenal medulla</tissue>
    </source>
</reference>
<reference key="24">
    <citation type="journal article" date="1999" name="Anal. Biochem.">
        <title>Chromogranin A from bovine adrenal medulla: molecular characterization of glycosylations, phosphorylations, and sequence heterogeneities by mass spectrometry.</title>
        <authorList>
            <person name="Bauer S.H."/>
            <person name="Zhang X.Y."/>
            <person name="Van Dongen W."/>
            <person name="Claeys M."/>
            <person name="Przybylski M."/>
        </authorList>
    </citation>
    <scope>GLYCOSYLATION AT SER-185 AND THR-249</scope>
    <scope>PHOSPHORYLATION AT SER-99; SER-142; SER-315; SER-390 AND SER-394</scope>
    <scope>DISULFIDE BOND</scope>
</reference>
<reference key="25">
    <citation type="journal article" date="2005" name="Cell. Mol. Life Sci.">
        <title>New antimicrobial activity for the catecholamine release-inhibitory peptide from chromogranin A.</title>
        <authorList>
            <person name="Briolat J."/>
            <person name="Wu S.D."/>
            <person name="Mahata S.K."/>
            <person name="Gonthier B."/>
            <person name="Bagnard D."/>
            <person name="Chasserot-Golaz S."/>
            <person name="Helle K.B."/>
            <person name="Aunis D."/>
            <person name="Metz-Boutigue M.H."/>
        </authorList>
    </citation>
    <scope>FUNCTION (CATESTATIN)</scope>
</reference>
<reference key="26">
    <citation type="journal article" date="2011" name="Mol. Endocrinol.">
        <title>Serpinin: a novel chromogranin A-derived, secreted peptide up-regulates protease nexin-1 expression and granule biogenesis in endocrine cells.</title>
        <authorList>
            <person name="Koshimizu H."/>
            <person name="Cawley N.X."/>
            <person name="Kim T."/>
            <person name="Yergey A.L."/>
            <person name="Loh Y.P."/>
        </authorList>
    </citation>
    <scope>FUNCTION (SERPININ)</scope>
</reference>
<reference key="27">
    <citation type="journal article" date="1998" name="Regul. Pept.">
        <title>Mechanism of action of chromogranin A on catecholamine release: molecular modeling of the catestatin region reveals a beta-strand/loop/beta-strand structure secured by hydrophobic interactions and predictive of activity.</title>
        <authorList>
            <person name="Tsigelny I."/>
            <person name="Mahata S.K."/>
            <person name="Taupenot L."/>
            <person name="Preece N.E."/>
            <person name="Mahata M."/>
            <person name="Khan I."/>
            <person name="Parmer R.J."/>
            <person name="O'Connor D.T."/>
        </authorList>
    </citation>
    <scope>3D-STRUCTURE MODELING OF CATESTATIN</scope>
</reference>
<reference key="28">
    <citation type="journal article" date="2001" name="J. Biol. Chem.">
        <title>Structural and biological characterization of chromofungin, the antifungal chromogranin A-(47-66)-derived peptide.</title>
        <authorList>
            <person name="Lugardon K."/>
            <person name="Chasserot-Golaz S."/>
            <person name="Kieffer A.E."/>
            <person name="Maget-Dana R."/>
            <person name="Nullans G."/>
            <person name="Kieffer B."/>
            <person name="Aunis D."/>
            <person name="Metz-Boutigue M.H."/>
        </authorList>
    </citation>
    <scope>STRUCTURE BY NMR OF 65-88</scope>
    <scope>FUNCTION (CHROMOFUNGIN)</scope>
    <scope>SUBCELLULAR LOCATION</scope>
</reference>
<reference key="29">
    <citation type="journal article" date="2004" name="Regul. Pept.">
        <title>Conformational preferences and activities of peptides from the catecholamine release-inhibitory (catestatin) region of chromogranin A.</title>
        <authorList>
            <person name="Preece N.E."/>
            <person name="Nguyen M."/>
            <person name="Mahata M."/>
            <person name="Mahata S.K."/>
            <person name="Mahapatra N.R."/>
            <person name="Tsigelny I."/>
            <person name="O'Connor D.T."/>
        </authorList>
    </citation>
    <scope>STRUCTURE BY NMR OF 368-380</scope>
</reference>
<comment type="function">
    <molecule>Pancreastatin</molecule>
    <text evidence="16">Strongly inhibits glucose induced insulin release from the pancreas.</text>
</comment>
<comment type="function">
    <molecule>Chromostatin</molecule>
    <text evidence="13">Completely inhibits catecholamine release from chromaffin cells.</text>
</comment>
<comment type="function">
    <molecule>Chromacin</molecule>
    <text evidence="21">Has antibacterial activity against M.luteus. Not active against E.coli.</text>
</comment>
<comment type="function">
    <molecule>Catestatin</molecule>
    <text evidence="2 11 22 23">Inhibits catecholamine release from chromaffin cells and noradrenergic neurons by acting as a non-competitive nicotinic cholinergic antagonist (PubMed:9294131, PubMed:9786174). Displays antibacterial activity against Gram-positive bacteria M.luteus and B.megaterium, and Gram-negative bacteria E.coli, and antifungal activity against a variety of filamentous fungi including A.fumigatus, N.hematococca, F.culmorum, F.oxyporum, T.mentagrophytes and several forms of Candida: C.albicans, C.tropicalis, C.glabrata and C.neoform (PubMed:15723172). Can induce mast cell migration, degranulation and production of cytokines and chemokines (By similarity).</text>
</comment>
<comment type="function">
    <molecule>Vasostatin-1</molecule>
    <text evidence="6">Has antibacterial activity against Gram-positive bacteria M.luteus, B.megaterium. Not active against Gram-positive bacteria B.cereus, B.subtilis, S.pyogenes, M.fortuitum, S.aureus and L.monocytogenes and against Gram-negative bacteria E.coli, E.cloacae, S.typhimurium, K.pneumoniae and P.aeruginosa. Possesses antifungal activity against N.crassa, A.fumigatus, A.brassicicola, N.hematococca, F.culmorum and F.oxyporum and against the yeast S.cerevisiae and C.albicans. Inactive against A.benhamiae.</text>
</comment>
<comment type="function">
    <molecule>Chromofungin</molecule>
    <text evidence="8">Has antifungal activity against N.crassa, A.fumigatus, A.brassicicola, N.hematococca, F.culmorum, F.oxyporum, A.benhamiae, C.neoformans, as well as against yeasts C.albicans, and C.tropicalis. Seems to be inactive against C.glabrata. Interacts with the fungal cell wall, crosses the plasma membrane and accumulates in fungal cells where it inhibits calcineurin activity.</text>
</comment>
<comment type="function">
    <molecule>Serpinin</molecule>
    <text evidence="14">Regulates granule biogenesis in endocrine cells by up-regulating the transcription of protease nexin 1 (SERPINE2) via a cAMP-PKA-SP1 pathway. This leads to inhibition of granule protein degradation in the Golgi complex which in turn promotes granule formation (PubMed:21436258).</text>
</comment>
<comment type="subunit">
    <text evidence="2 3 9">Self-interacts; self-assembly is promoted in vitro by chondroitin sulfate attachment which occurs at mildly acidic pH conditions (By similarity). Interacts with SCG3 (By similarity). Interacts with ITPR1 in the secretory granules (PubMed:11584008).</text>
</comment>
<comment type="subcellular location">
    <molecule>Serpinin</molecule>
    <subcellularLocation>
        <location evidence="7">Secreted</location>
    </subcellularLocation>
    <subcellularLocation>
        <location evidence="3 9">Cytoplasmic vesicle</location>
        <location evidence="3 9">Secretory vesicle</location>
    </subcellularLocation>
    <text evidence="3">Pyroglutaminated serpinin localizes to secretory vesicle.</text>
</comment>
<comment type="subcellular location">
    <subcellularLocation>
        <location evidence="1">Cytoplasmic vesicle</location>
        <location evidence="1">Secretory vesicle</location>
    </subcellularLocation>
    <subcellularLocation>
        <location evidence="1">Cytoplasmic vesicle</location>
        <location evidence="1">Secretory vesicle</location>
        <location evidence="1">Neuronal dense core vesicle</location>
    </subcellularLocation>
    <subcellularLocation>
        <location evidence="8">Secreted</location>
    </subcellularLocation>
    <text evidence="1">Associated with the secretory granule membrane through direct interaction to SCG3 that in turn binds to cholesterol-enriched lipid rafts in intragranular conditions. In pituitary gonadotropes, located in large secretory granules.</text>
</comment>
<comment type="tissue specificity">
    <text evidence="17 18">Highest concentration of GE-25 found in adrenal medulla with lower levels present in the pituitary, the intestinal mucosa and the pancreas. Also found in the brain.</text>
</comment>
<comment type="PTM">
    <text evidence="7 19 36">In secretory granules, is attacked at both N- and C-terminal sides by proteolytic enzymes generating numerous peptides of various activities. Proteolytic processing can give rise to additional longer forms of catestatin peptides which display a less potent catecholamine release-inhibitory activity (PubMed:10781584).</text>
</comment>
<comment type="PTM">
    <text evidence="2">O-glycosylated; contains chondroitin sulfate (CS). CS attachment is pH-dependent, being observed at mildly acidic conditions of pH 5 but not at neutral pH, and promotes self-assembly in vitro.</text>
</comment>
<comment type="mass spectrometry">
    <molecule>Vasostatin-1</molecule>
</comment>
<comment type="mass spectrometry">
    <molecule>Catestatin</molecule>
</comment>
<comment type="miscellaneous">
    <text>Binds calcium with a low-affinity.</text>
</comment>
<comment type="similarity">
    <text evidence="35">Belongs to the chromogranin/secretogranin protein family.</text>
</comment>
<feature type="signal peptide" evidence="10 12 15 20">
    <location>
        <begin position="1"/>
        <end position="18"/>
    </location>
</feature>
<feature type="chain" id="PRO_0000005398" description="Chromogranin-A">
    <location>
        <begin position="19"/>
        <end position="449"/>
    </location>
</feature>
<feature type="peptide" id="PRO_0000005399" description="Vasostatin-1" evidence="10">
    <location>
        <begin position="19"/>
        <end position="94"/>
    </location>
</feature>
<feature type="peptide" id="PRO_0000432587" description="Chromofungin" evidence="8">
    <location>
        <begin position="65"/>
        <end position="88"/>
    </location>
</feature>
<feature type="peptide" id="PRO_0000005400" description="Chromostatin" evidence="13">
    <location>
        <begin position="142"/>
        <end position="161"/>
    </location>
</feature>
<feature type="peptide" id="PRO_0000005401" description="Chromacin" evidence="21">
    <location>
        <begin position="191"/>
        <end position="212"/>
    </location>
</feature>
<feature type="peptide" id="PRO_0000005402" description="Pancreastatin" evidence="16">
    <location>
        <begin position="266"/>
        <end position="312"/>
    </location>
</feature>
<feature type="peptide" id="PRO_0000005403" description="WE-14" evidence="2">
    <location>
        <begin position="334"/>
        <end position="347"/>
    </location>
</feature>
<feature type="peptide" id="PRO_0000005404" description="Catestatin" evidence="10">
    <location>
        <begin position="362"/>
        <end position="382"/>
    </location>
</feature>
<feature type="peptide" id="PRO_0000432673" description="GE-25" evidence="33">
    <location>
        <begin position="385"/>
        <end position="409"/>
    </location>
</feature>
<feature type="peptide" id="PRO_0000432674" description="Serpinin-RRG" evidence="1">
    <location>
        <begin position="421"/>
        <end position="449"/>
    </location>
</feature>
<feature type="peptide" id="PRO_0000432675" description="Serpinin" evidence="28">
    <location>
        <begin position="421"/>
        <end position="446"/>
    </location>
</feature>
<feature type="peptide" id="PRO_0000432676" description="p-Glu serpinin precursor" evidence="3">
    <location>
        <begin position="424"/>
        <end position="446"/>
    </location>
</feature>
<feature type="region of interest" description="Disordered" evidence="4">
    <location>
        <begin position="87"/>
        <end position="431"/>
    </location>
</feature>
<feature type="compositionally biased region" description="Basic and acidic residues" evidence="4">
    <location>
        <begin position="107"/>
        <end position="140"/>
    </location>
</feature>
<feature type="compositionally biased region" description="Basic and acidic residues" evidence="4">
    <location>
        <begin position="233"/>
        <end position="242"/>
    </location>
</feature>
<feature type="compositionally biased region" description="Basic and acidic residues" evidence="4">
    <location>
        <begin position="279"/>
        <end position="297"/>
    </location>
</feature>
<feature type="compositionally biased region" description="Basic and acidic residues" evidence="4">
    <location>
        <begin position="323"/>
        <end position="351"/>
    </location>
</feature>
<feature type="compositionally biased region" description="Basic and acidic residues" evidence="4">
    <location>
        <begin position="406"/>
        <end position="423"/>
    </location>
</feature>
<feature type="modified residue" description="Phosphoserine" evidence="5">
    <location>
        <position position="99"/>
    </location>
</feature>
<feature type="modified residue" description="Phosphoserine" evidence="5">
    <location>
        <position position="142"/>
    </location>
</feature>
<feature type="modified residue" description="Phosphotyrosine" evidence="21">
    <location>
        <position position="191"/>
    </location>
</feature>
<feature type="modified residue" description="Phosphoserine" evidence="2">
    <location>
        <position position="200"/>
    </location>
</feature>
<feature type="modified residue" description="Phosphoserine" evidence="2">
    <location>
        <position position="215"/>
    </location>
</feature>
<feature type="modified residue" description="Phosphoserine" evidence="2">
    <location>
        <position position="295"/>
    </location>
</feature>
<feature type="modified residue" description="Glycine amide" evidence="16">
    <location>
        <position position="312"/>
    </location>
</feature>
<feature type="modified residue" description="Phosphoserine" evidence="5">
    <location>
        <position position="315"/>
    </location>
</feature>
<feature type="modified residue" description="Phosphoserine" evidence="2">
    <location>
        <position position="325"/>
    </location>
</feature>
<feature type="modified residue" description="Phosphoserine" evidence="1">
    <location>
        <position position="363"/>
    </location>
</feature>
<feature type="modified residue" description="Methionine sulfoxide" evidence="7">
    <location>
        <position position="364"/>
    </location>
</feature>
<feature type="modified residue" description="Phosphoserine" evidence="5">
    <location>
        <position position="390"/>
    </location>
</feature>
<feature type="modified residue" description="Phosphoserine" evidence="5">
    <location>
        <position position="394"/>
    </location>
</feature>
<feature type="modified residue" description="Phosphoserine" evidence="1">
    <location>
        <position position="416"/>
    </location>
</feature>
<feature type="modified residue" description="Phosphoserine" evidence="1">
    <location>
        <position position="430"/>
    </location>
</feature>
<feature type="glycosylation site" id="CAR_000114" description="O-linked (GalNAc...) serine" evidence="5">
    <location>
        <position position="185"/>
    </location>
</feature>
<feature type="glycosylation site" id="CAR_000203" description="O-linked (GalNAc...) serine" evidence="21">
    <location>
        <position position="204"/>
    </location>
</feature>
<feature type="glycosylation site" id="CAR_000115" description="O-linked (GalNAc...) threonine" evidence="5">
    <location>
        <position position="249"/>
    </location>
</feature>
<feature type="glycosylation site" description="O-linked (Xyl...) (chondroitin sulfate) serine" evidence="2">
    <location>
        <position position="416"/>
    </location>
</feature>
<feature type="disulfide bond" evidence="5">
    <location>
        <begin position="35"/>
        <end position="56"/>
    </location>
</feature>
<feature type="sequence conflict" description="In Ref. 4; AAA30765." evidence="35" ref="4">
    <original>N</original>
    <variation>T</variation>
    <location>
        <position position="112"/>
    </location>
</feature>
<feature type="sequence conflict" description="In Ref. 2; CAA27636 and 6; AAI05516." evidence="35" ref="2 6">
    <original>F</original>
    <variation>S</variation>
    <location>
        <position position="136"/>
    </location>
</feature>
<feature type="sequence conflict" description="In Ref. 3; CAA27841." evidence="35" ref="3">
    <original>SP</original>
    <variation>PQ</variation>
    <location>
        <begin position="154"/>
        <end position="155"/>
    </location>
</feature>
<feature type="sequence conflict" description="In Ref. 3; CAA27841." evidence="35" ref="3">
    <original>P</original>
    <variation>R</variation>
    <location>
        <position position="159"/>
    </location>
</feature>
<feature type="sequence conflict" description="In Ref. 1; AAB21297." evidence="35" ref="1">
    <original>Y</original>
    <variation>H</variation>
    <location>
        <position position="191"/>
    </location>
</feature>
<feature type="sequence conflict" description="In Ref. 1; AAB21297." evidence="35" ref="1">
    <original>P</original>
    <variation>A</variation>
    <location>
        <position position="254"/>
    </location>
</feature>
<feature type="sequence conflict" description="In Ref. 5; AAC48700." evidence="35" ref="5">
    <original>A</original>
    <variation>S</variation>
    <location>
        <position position="293"/>
    </location>
</feature>
<feature type="sequence conflict" description="In Ref. 2; CAA27636, 6; AAI05516 and 13; AA sequence." evidence="35" ref="2 6 13">
    <original>R</original>
    <variation>H</variation>
    <location>
        <position position="311"/>
    </location>
</feature>
<feature type="sequence conflict" description="In Ref. 2; CAA27636, 6; AAI05516 and 13; AA sequence." evidence="35" ref="2 6 13">
    <original>E</original>
    <variation>K</variation>
    <location>
        <position position="319"/>
    </location>
</feature>
<feature type="sequence conflict" description="In Ref. 4; AAA30765." evidence="35" ref="4">
    <original>G</original>
    <variation>R</variation>
    <location>
        <position position="379"/>
    </location>
</feature>
<feature type="sequence conflict" description="In Ref. 2; CAA27636 and 6; AAI05516." evidence="35" ref="2 6">
    <original>R</original>
    <variation>Q</variation>
    <location>
        <position position="391"/>
    </location>
</feature>
<feature type="turn" evidence="37">
    <location>
        <begin position="369"/>
        <end position="374"/>
    </location>
</feature>
<feature type="strand" evidence="37">
    <location>
        <begin position="375"/>
        <end position="377"/>
    </location>
</feature>
<sequence>MRSAAVLALLLCAGQVIALPVNSPMNKGDTEVMKCIVEVISDTLSKPSPMPVSKECFETLRGDERILSILRHQNLLKELQDLALQGAKERTHQQKKHSSYEDELSEVLEKPNDQAEPKEVTEEVSSKDAAEKRDDFKEVEKSDEDSDGDRPQASPGLGPGPKVEEDNQAPGEEEEAPSNAHPLASLPSPKYPGPQAKEDSEGPSQGPASREKGLSAEQGRQTEREEEEEKWEEAEAREKAVPEEESPPTAAFKPPPSLGNKETQRAAPGWPEDGAGKMGAEEAKPPEGKGEWAHSRQEEEEMARAPQVLFRGGKSGEPEQEEQLSKEWEDAKRWSKMDQLAKELTAEKRLEGEEEEEEDPDRSMRLSFRARGYGFRGPGLQLRRGWRPNSREDSVEAGLPLQVRGYPEEKKEEEGSANRRPEDQELESLSAIEAELEKVAHQLEELRRG</sequence>
<proteinExistence type="evidence at protein level"/>
<dbReference type="EMBL" id="S79270">
    <property type="protein sequence ID" value="AAB21297.1"/>
    <property type="molecule type" value="Genomic_DNA"/>
</dbReference>
<dbReference type="EMBL" id="S79256">
    <property type="protein sequence ID" value="AAB21297.1"/>
    <property type="status" value="JOINED"/>
    <property type="molecule type" value="Genomic_DNA"/>
</dbReference>
<dbReference type="EMBL" id="S79258">
    <property type="protein sequence ID" value="AAB21297.1"/>
    <property type="status" value="JOINED"/>
    <property type="molecule type" value="Genomic_DNA"/>
</dbReference>
<dbReference type="EMBL" id="S79260">
    <property type="protein sequence ID" value="AAB21297.1"/>
    <property type="status" value="JOINED"/>
    <property type="molecule type" value="Genomic_DNA"/>
</dbReference>
<dbReference type="EMBL" id="S79262">
    <property type="protein sequence ID" value="AAB21297.1"/>
    <property type="status" value="JOINED"/>
    <property type="molecule type" value="Genomic_DNA"/>
</dbReference>
<dbReference type="EMBL" id="S79264">
    <property type="protein sequence ID" value="AAB21297.1"/>
    <property type="status" value="JOINED"/>
    <property type="molecule type" value="Genomic_DNA"/>
</dbReference>
<dbReference type="EMBL" id="S79266">
    <property type="protein sequence ID" value="AAB21297.1"/>
    <property type="status" value="JOINED"/>
    <property type="molecule type" value="Genomic_DNA"/>
</dbReference>
<dbReference type="EMBL" id="S79268">
    <property type="protein sequence ID" value="AAB21297.1"/>
    <property type="status" value="JOINED"/>
    <property type="molecule type" value="Genomic_DNA"/>
</dbReference>
<dbReference type="EMBL" id="X04012">
    <property type="protein sequence ID" value="CAA27636.1"/>
    <property type="molecule type" value="mRNA"/>
</dbReference>
<dbReference type="EMBL" id="X04298">
    <property type="protein sequence ID" value="CAA27841.1"/>
    <property type="molecule type" value="mRNA"/>
</dbReference>
<dbReference type="EMBL" id="M16971">
    <property type="protein sequence ID" value="AAA30765.1"/>
    <property type="molecule type" value="mRNA"/>
</dbReference>
<dbReference type="EMBL" id="U73523">
    <property type="protein sequence ID" value="AAC48700.1"/>
    <property type="molecule type" value="mRNA"/>
</dbReference>
<dbReference type="EMBL" id="BC105515">
    <property type="protein sequence ID" value="AAI05516.1"/>
    <property type="molecule type" value="mRNA"/>
</dbReference>
<dbReference type="PIR" id="A41520">
    <property type="entry name" value="A41520"/>
</dbReference>
<dbReference type="RefSeq" id="NP_851348.1">
    <property type="nucleotide sequence ID" value="NM_181005.2"/>
</dbReference>
<dbReference type="PDB" id="1N2Y">
    <property type="method" value="NMR"/>
    <property type="chains" value="A=368-380"/>
</dbReference>
<dbReference type="PDBsum" id="1N2Y"/>
<dbReference type="SMR" id="P05059"/>
<dbReference type="FunCoup" id="P05059">
    <property type="interactions" value="127"/>
</dbReference>
<dbReference type="MINT" id="P05059"/>
<dbReference type="STRING" id="9913.ENSBTAP00000069771"/>
<dbReference type="GlyConnect" id="92">
    <property type="glycosylation" value="8 O-Linked glycans (3 sites)"/>
</dbReference>
<dbReference type="GlyCosmos" id="P05059">
    <property type="glycosylation" value="3 sites, 13 glycans"/>
</dbReference>
<dbReference type="GlyGen" id="P05059">
    <property type="glycosylation" value="4 sites, 13 O-linked glycans (3 sites)"/>
</dbReference>
<dbReference type="iPTMnet" id="P05059"/>
<dbReference type="PaxDb" id="9913-ENSBTAP00000012973"/>
<dbReference type="PeptideAtlas" id="P05059"/>
<dbReference type="GeneID" id="281070"/>
<dbReference type="KEGG" id="bta:281070"/>
<dbReference type="CTD" id="1113"/>
<dbReference type="eggNOG" id="ENOG502RZBD">
    <property type="taxonomic scope" value="Eukaryota"/>
</dbReference>
<dbReference type="HOGENOM" id="CLU_050861_0_0_1"/>
<dbReference type="InParanoid" id="P05059"/>
<dbReference type="OrthoDB" id="9948620at2759"/>
<dbReference type="TreeFam" id="TF336596"/>
<dbReference type="EvolutionaryTrace" id="P05059"/>
<dbReference type="Proteomes" id="UP000009136">
    <property type="component" value="Unplaced"/>
</dbReference>
<dbReference type="GO" id="GO:0042583">
    <property type="term" value="C:chromaffin granule"/>
    <property type="evidence" value="ECO:0000314"/>
    <property type="project" value="CAFA"/>
</dbReference>
<dbReference type="GO" id="GO:0005576">
    <property type="term" value="C:extracellular region"/>
    <property type="evidence" value="ECO:0000314"/>
    <property type="project" value="UniProtKB"/>
</dbReference>
<dbReference type="GO" id="GO:0005615">
    <property type="term" value="C:extracellular space"/>
    <property type="evidence" value="ECO:0000318"/>
    <property type="project" value="GO_Central"/>
</dbReference>
<dbReference type="GO" id="GO:0098992">
    <property type="term" value="C:neuronal dense core vesicle"/>
    <property type="evidence" value="ECO:0000250"/>
    <property type="project" value="UniProtKB"/>
</dbReference>
<dbReference type="GO" id="GO:0030141">
    <property type="term" value="C:secretory granule"/>
    <property type="evidence" value="ECO:0000314"/>
    <property type="project" value="UniProtKB"/>
</dbReference>
<dbReference type="GO" id="GO:0030133">
    <property type="term" value="C:transport vesicle"/>
    <property type="evidence" value="ECO:0007669"/>
    <property type="project" value="UniProtKB-SubCell"/>
</dbReference>
<dbReference type="GO" id="GO:0005509">
    <property type="term" value="F:calcium ion binding"/>
    <property type="evidence" value="ECO:0000314"/>
    <property type="project" value="CAFA"/>
</dbReference>
<dbReference type="GO" id="GO:0042742">
    <property type="term" value="P:defense response to bacterium"/>
    <property type="evidence" value="ECO:0000318"/>
    <property type="project" value="GO_Central"/>
</dbReference>
<dbReference type="GO" id="GO:0050832">
    <property type="term" value="P:defense response to fungus"/>
    <property type="evidence" value="ECO:0000314"/>
    <property type="project" value="UniProtKB"/>
</dbReference>
<dbReference type="GO" id="GO:0050829">
    <property type="term" value="P:defense response to Gram-negative bacterium"/>
    <property type="evidence" value="ECO:0000314"/>
    <property type="project" value="UniProtKB"/>
</dbReference>
<dbReference type="GO" id="GO:0050830">
    <property type="term" value="P:defense response to Gram-positive bacterium"/>
    <property type="evidence" value="ECO:0000314"/>
    <property type="project" value="UniProtKB"/>
</dbReference>
<dbReference type="GO" id="GO:0045087">
    <property type="term" value="P:innate immune response"/>
    <property type="evidence" value="ECO:0000303"/>
    <property type="project" value="UniProtKB"/>
</dbReference>
<dbReference type="GO" id="GO:0031640">
    <property type="term" value="P:killing of cells of another organism"/>
    <property type="evidence" value="ECO:0007669"/>
    <property type="project" value="UniProtKB-KW"/>
</dbReference>
<dbReference type="GO" id="GO:0045576">
    <property type="term" value="P:mast cell activation"/>
    <property type="evidence" value="ECO:0000250"/>
    <property type="project" value="UniProtKB"/>
</dbReference>
<dbReference type="GO" id="GO:0002551">
    <property type="term" value="P:mast cell chemotaxis"/>
    <property type="evidence" value="ECO:0000250"/>
    <property type="project" value="UniProtKB"/>
</dbReference>
<dbReference type="GO" id="GO:0043303">
    <property type="term" value="P:mast cell degranulation"/>
    <property type="evidence" value="ECO:0000250"/>
    <property type="project" value="UniProtKB"/>
</dbReference>
<dbReference type="GO" id="GO:0016525">
    <property type="term" value="P:negative regulation of angiogenesis"/>
    <property type="evidence" value="ECO:0000304"/>
    <property type="project" value="UniProtKB"/>
</dbReference>
<dbReference type="GO" id="GO:0033604">
    <property type="term" value="P:negative regulation of catecholamine secretion"/>
    <property type="evidence" value="ECO:0000314"/>
    <property type="project" value="UniProtKB"/>
</dbReference>
<dbReference type="GO" id="GO:0046888">
    <property type="term" value="P:negative regulation of hormone secretion"/>
    <property type="evidence" value="ECO:0000314"/>
    <property type="project" value="UniProtKB"/>
</dbReference>
<dbReference type="GO" id="GO:0046676">
    <property type="term" value="P:negative regulation of insulin secretion"/>
    <property type="evidence" value="ECO:0000314"/>
    <property type="project" value="UniProtKB"/>
</dbReference>
<dbReference type="GO" id="GO:2000707">
    <property type="term" value="P:positive regulation of dense core granule biogenesis"/>
    <property type="evidence" value="ECO:0000250"/>
    <property type="project" value="UniProtKB"/>
</dbReference>
<dbReference type="GO" id="GO:0030155">
    <property type="term" value="P:regulation of cell adhesion"/>
    <property type="evidence" value="ECO:0000304"/>
    <property type="project" value="UniProtKB"/>
</dbReference>
<dbReference type="DisProt" id="DP00118"/>
<dbReference type="InterPro" id="IPR001819">
    <property type="entry name" value="Chromogranin_AB"/>
</dbReference>
<dbReference type="InterPro" id="IPR018054">
    <property type="entry name" value="Chromogranin_CS"/>
</dbReference>
<dbReference type="InterPro" id="IPR001990">
    <property type="entry name" value="Granin"/>
</dbReference>
<dbReference type="PANTHER" id="PTHR10583">
    <property type="entry name" value="CHROMOGRANIN"/>
    <property type="match status" value="1"/>
</dbReference>
<dbReference type="PANTHER" id="PTHR10583:SF1">
    <property type="entry name" value="CHROMOGRANIN-A"/>
    <property type="match status" value="1"/>
</dbReference>
<dbReference type="Pfam" id="PF01271">
    <property type="entry name" value="Granin"/>
    <property type="match status" value="2"/>
</dbReference>
<dbReference type="PRINTS" id="PR00659">
    <property type="entry name" value="CHROMOGRANIN"/>
</dbReference>
<dbReference type="PROSITE" id="PS00422">
    <property type="entry name" value="GRANINS_1"/>
    <property type="match status" value="1"/>
</dbReference>
<dbReference type="PROSITE" id="PS00423">
    <property type="entry name" value="GRANINS_2"/>
    <property type="match status" value="1"/>
</dbReference>
<accession>P05059</accession>
<accession>P79392</accession>
<accession>Q2KJ52</accession>
<evidence type="ECO:0000250" key="1">
    <source>
        <dbReference type="UniProtKB" id="P10354"/>
    </source>
</evidence>
<evidence type="ECO:0000250" key="2">
    <source>
        <dbReference type="UniProtKB" id="P10645"/>
    </source>
</evidence>
<evidence type="ECO:0000250" key="3">
    <source>
        <dbReference type="UniProtKB" id="P26339"/>
    </source>
</evidence>
<evidence type="ECO:0000256" key="4">
    <source>
        <dbReference type="SAM" id="MobiDB-lite"/>
    </source>
</evidence>
<evidence type="ECO:0000269" key="5">
    <source>
    </source>
</evidence>
<evidence type="ECO:0000269" key="6">
    <source>
    </source>
</evidence>
<evidence type="ECO:0000269" key="7">
    <source>
    </source>
</evidence>
<evidence type="ECO:0000269" key="8">
    <source>
    </source>
</evidence>
<evidence type="ECO:0000269" key="9">
    <source>
    </source>
</evidence>
<evidence type="ECO:0000269" key="10">
    <source>
    </source>
</evidence>
<evidence type="ECO:0000269" key="11">
    <source>
    </source>
</evidence>
<evidence type="ECO:0000269" key="12">
    <source>
    </source>
</evidence>
<evidence type="ECO:0000269" key="13">
    <source>
    </source>
</evidence>
<evidence type="ECO:0000269" key="14">
    <source>
    </source>
</evidence>
<evidence type="ECO:0000269" key="15">
    <source>
    </source>
</evidence>
<evidence type="ECO:0000269" key="16">
    <source>
    </source>
</evidence>
<evidence type="ECO:0000269" key="17">
    <source>
    </source>
</evidence>
<evidence type="ECO:0000269" key="18">
    <source>
    </source>
</evidence>
<evidence type="ECO:0000269" key="19">
    <source>
    </source>
</evidence>
<evidence type="ECO:0000269" key="20">
    <source>
    </source>
</evidence>
<evidence type="ECO:0000269" key="21">
    <source>
    </source>
</evidence>
<evidence type="ECO:0000269" key="22">
    <source>
    </source>
</evidence>
<evidence type="ECO:0000269" key="23">
    <source>
    </source>
</evidence>
<evidence type="ECO:0000303" key="24">
    <source>
    </source>
</evidence>
<evidence type="ECO:0000303" key="25">
    <source>
    </source>
</evidence>
<evidence type="ECO:0000303" key="26">
    <source>
    </source>
</evidence>
<evidence type="ECO:0000303" key="27">
    <source>
    </source>
</evidence>
<evidence type="ECO:0000303" key="28">
    <source>
    </source>
</evidence>
<evidence type="ECO:0000303" key="29">
    <source>
    </source>
</evidence>
<evidence type="ECO:0000303" key="30">
    <source>
    </source>
</evidence>
<evidence type="ECO:0000303" key="31">
    <source>
    </source>
</evidence>
<evidence type="ECO:0000303" key="32">
    <source>
    </source>
</evidence>
<evidence type="ECO:0000303" key="33">
    <source>
    </source>
</evidence>
<evidence type="ECO:0000303" key="34">
    <source>
    </source>
</evidence>
<evidence type="ECO:0000305" key="35"/>
<evidence type="ECO:0000305" key="36">
    <source>
    </source>
</evidence>
<evidence type="ECO:0007829" key="37">
    <source>
        <dbReference type="PDB" id="1N2Y"/>
    </source>
</evidence>
<organism>
    <name type="scientific">Bos taurus</name>
    <name type="common">Bovine</name>
    <dbReference type="NCBI Taxonomy" id="9913"/>
    <lineage>
        <taxon>Eukaryota</taxon>
        <taxon>Metazoa</taxon>
        <taxon>Chordata</taxon>
        <taxon>Craniata</taxon>
        <taxon>Vertebrata</taxon>
        <taxon>Euteleostomi</taxon>
        <taxon>Mammalia</taxon>
        <taxon>Eutheria</taxon>
        <taxon>Laurasiatheria</taxon>
        <taxon>Artiodactyla</taxon>
        <taxon>Ruminantia</taxon>
        <taxon>Pecora</taxon>
        <taxon>Bovidae</taxon>
        <taxon>Bovinae</taxon>
        <taxon>Bos</taxon>
    </lineage>
</organism>